<evidence type="ECO:0000255" key="1">
    <source>
        <dbReference type="HAMAP-Rule" id="MF_00019"/>
    </source>
</evidence>
<accession>A5FRR6</accession>
<proteinExistence type="inferred from homology"/>
<reference key="1">
    <citation type="submission" date="2007-05" db="EMBL/GenBank/DDBJ databases">
        <title>Complete sequence of Dehalococcoides sp. BAV1.</title>
        <authorList>
            <consortium name="US DOE Joint Genome Institute"/>
            <person name="Copeland A."/>
            <person name="Lucas S."/>
            <person name="Lapidus A."/>
            <person name="Barry K."/>
            <person name="Detter J.C."/>
            <person name="Glavina del Rio T."/>
            <person name="Hammon N."/>
            <person name="Israni S."/>
            <person name="Pitluck S."/>
            <person name="Lowry S."/>
            <person name="Clum A."/>
            <person name="Schmutz J."/>
            <person name="Larimer F."/>
            <person name="Land M."/>
            <person name="Hauser L."/>
            <person name="Kyrpides N."/>
            <person name="Kim E."/>
            <person name="Ritalahti K.M."/>
            <person name="Loeffler F."/>
            <person name="Richardson P."/>
        </authorList>
    </citation>
    <scope>NUCLEOTIDE SEQUENCE [LARGE SCALE GENOMIC DNA]</scope>
    <source>
        <strain>ATCC BAA-2100 / JCM 16839 / KCTC 5957 / BAV1</strain>
    </source>
</reference>
<keyword id="KW-0963">Cytoplasm</keyword>
<keyword id="KW-0444">Lipid biosynthesis</keyword>
<keyword id="KW-0443">Lipid metabolism</keyword>
<keyword id="KW-0594">Phospholipid biosynthesis</keyword>
<keyword id="KW-1208">Phospholipid metabolism</keyword>
<keyword id="KW-0808">Transferase</keyword>
<protein>
    <recommendedName>
        <fullName evidence="1">Phosphate acyltransferase</fullName>
        <ecNumber evidence="1">2.3.1.274</ecNumber>
    </recommendedName>
    <alternativeName>
        <fullName evidence="1">Acyl-ACP phosphotransacylase</fullName>
    </alternativeName>
    <alternativeName>
        <fullName evidence="1">Acyl-[acyl-carrier-protein]--phosphate acyltransferase</fullName>
    </alternativeName>
    <alternativeName>
        <fullName evidence="1">Phosphate-acyl-ACP acyltransferase</fullName>
    </alternativeName>
</protein>
<feature type="chain" id="PRO_1000074164" description="Phosphate acyltransferase">
    <location>
        <begin position="1"/>
        <end position="347"/>
    </location>
</feature>
<sequence>MIIAVDVDGGDYAPKEIIKGALKAAQEYKIGLILLGKKEVIHVHAGHYLKKLPIEIVHCPQTVTFNEHAVEAIKGKPQSAIVIGTSLVKQGKADAFISAGNTGAVLAAAFFILGKIDGVERPALGAIITTRPHIPSLLIDAGANAECRPNHLDEFAHLGNIYAKQVLGLENPRIGLLNNGEEEAKGTKLTLETHQLLKKSKLNFIGNIEGHDISLNKADVIVTDGFTGNIVLKTLEGLGDALLKVRKVGHAIDSAAHLRGRALLADVGLGSMVKGMDFEECGGACLLGVKGTIIVAHGRSHARAIKNAIGLAKRTAEKGVDKLIAEDIKSRTKAGTEGDPKNVNTPV</sequence>
<organism>
    <name type="scientific">Dehalococcoides mccartyi (strain ATCC BAA-2100 / JCM 16839 / KCTC 5957 / BAV1)</name>
    <dbReference type="NCBI Taxonomy" id="216389"/>
    <lineage>
        <taxon>Bacteria</taxon>
        <taxon>Bacillati</taxon>
        <taxon>Chloroflexota</taxon>
        <taxon>Dehalococcoidia</taxon>
        <taxon>Dehalococcoidales</taxon>
        <taxon>Dehalococcoidaceae</taxon>
        <taxon>Dehalococcoides</taxon>
    </lineage>
</organism>
<name>PLSX_DEHMB</name>
<gene>
    <name evidence="1" type="primary">plsX</name>
    <name type="ordered locus">DehaBAV1_0519</name>
</gene>
<comment type="function">
    <text evidence="1">Catalyzes the reversible formation of acyl-phosphate (acyl-PO(4)) from acyl-[acyl-carrier-protein] (acyl-ACP). This enzyme utilizes acyl-ACP as fatty acyl donor, but not acyl-CoA.</text>
</comment>
<comment type="catalytic activity">
    <reaction evidence="1">
        <text>a fatty acyl-[ACP] + phosphate = an acyl phosphate + holo-[ACP]</text>
        <dbReference type="Rhea" id="RHEA:42292"/>
        <dbReference type="Rhea" id="RHEA-COMP:9685"/>
        <dbReference type="Rhea" id="RHEA-COMP:14125"/>
        <dbReference type="ChEBI" id="CHEBI:43474"/>
        <dbReference type="ChEBI" id="CHEBI:59918"/>
        <dbReference type="ChEBI" id="CHEBI:64479"/>
        <dbReference type="ChEBI" id="CHEBI:138651"/>
        <dbReference type="EC" id="2.3.1.274"/>
    </reaction>
</comment>
<comment type="pathway">
    <text evidence="1">Lipid metabolism; phospholipid metabolism.</text>
</comment>
<comment type="subunit">
    <text evidence="1">Homodimer. Probably interacts with PlsY.</text>
</comment>
<comment type="subcellular location">
    <subcellularLocation>
        <location evidence="1">Cytoplasm</location>
    </subcellularLocation>
    <text evidence="1">Associated with the membrane possibly through PlsY.</text>
</comment>
<comment type="similarity">
    <text evidence="1">Belongs to the PlsX family.</text>
</comment>
<dbReference type="EC" id="2.3.1.274" evidence="1"/>
<dbReference type="EMBL" id="CP000688">
    <property type="protein sequence ID" value="ABQ17104.1"/>
    <property type="molecule type" value="Genomic_DNA"/>
</dbReference>
<dbReference type="SMR" id="A5FRR6"/>
<dbReference type="KEGG" id="deb:DehaBAV1_0519"/>
<dbReference type="PATRIC" id="fig|216389.18.peg.563"/>
<dbReference type="HOGENOM" id="CLU_039379_1_1_0"/>
<dbReference type="UniPathway" id="UPA00085"/>
<dbReference type="GO" id="GO:0005737">
    <property type="term" value="C:cytoplasm"/>
    <property type="evidence" value="ECO:0007669"/>
    <property type="project" value="UniProtKB-SubCell"/>
</dbReference>
<dbReference type="GO" id="GO:0043811">
    <property type="term" value="F:phosphate:acyl-[acyl carrier protein] acyltransferase activity"/>
    <property type="evidence" value="ECO:0007669"/>
    <property type="project" value="UniProtKB-UniRule"/>
</dbReference>
<dbReference type="GO" id="GO:0006633">
    <property type="term" value="P:fatty acid biosynthetic process"/>
    <property type="evidence" value="ECO:0007669"/>
    <property type="project" value="UniProtKB-UniRule"/>
</dbReference>
<dbReference type="GO" id="GO:0008654">
    <property type="term" value="P:phospholipid biosynthetic process"/>
    <property type="evidence" value="ECO:0007669"/>
    <property type="project" value="UniProtKB-KW"/>
</dbReference>
<dbReference type="Gene3D" id="3.40.718.10">
    <property type="entry name" value="Isopropylmalate Dehydrogenase"/>
    <property type="match status" value="1"/>
</dbReference>
<dbReference type="HAMAP" id="MF_00019">
    <property type="entry name" value="PlsX"/>
    <property type="match status" value="1"/>
</dbReference>
<dbReference type="InterPro" id="IPR003664">
    <property type="entry name" value="FA_synthesis"/>
</dbReference>
<dbReference type="InterPro" id="IPR012281">
    <property type="entry name" value="Phospholipid_synth_PlsX-like"/>
</dbReference>
<dbReference type="NCBIfam" id="TIGR00182">
    <property type="entry name" value="plsX"/>
    <property type="match status" value="1"/>
</dbReference>
<dbReference type="PANTHER" id="PTHR30100">
    <property type="entry name" value="FATTY ACID/PHOSPHOLIPID SYNTHESIS PROTEIN PLSX"/>
    <property type="match status" value="1"/>
</dbReference>
<dbReference type="PANTHER" id="PTHR30100:SF1">
    <property type="entry name" value="PHOSPHATE ACYLTRANSFERASE"/>
    <property type="match status" value="1"/>
</dbReference>
<dbReference type="Pfam" id="PF02504">
    <property type="entry name" value="FA_synthesis"/>
    <property type="match status" value="1"/>
</dbReference>
<dbReference type="PIRSF" id="PIRSF002465">
    <property type="entry name" value="Phsphlp_syn_PlsX"/>
    <property type="match status" value="1"/>
</dbReference>
<dbReference type="SUPFAM" id="SSF53659">
    <property type="entry name" value="Isocitrate/Isopropylmalate dehydrogenase-like"/>
    <property type="match status" value="1"/>
</dbReference>